<organism>
    <name type="scientific">Acanthamoeba polyphaga mimivirus</name>
    <name type="common">APMV</name>
    <dbReference type="NCBI Taxonomy" id="212035"/>
    <lineage>
        <taxon>Viruses</taxon>
        <taxon>Varidnaviria</taxon>
        <taxon>Bamfordvirae</taxon>
        <taxon>Nucleocytoviricota</taxon>
        <taxon>Megaviricetes</taxon>
        <taxon>Imitervirales</taxon>
        <taxon>Mimiviridae</taxon>
        <taxon>Megamimivirinae</taxon>
        <taxon>Mimivirus</taxon>
        <taxon>Mimivirus bradfordmassiliense</taxon>
    </lineage>
</organism>
<sequence length="335" mass="38296">MSKRVTSSKKSKIMREDSENDSAKNLSKTSKSVSKSKEAGSKRTKQNSSKSSKDLKTTKNIGGSKSSRTYNSEGSKNIKKTSSSKDSKVIKKNKQKVESSDSEKHSENKSHKKSSKSSSISRKKPIKKDTRKINIELVSDSDNNSDSELNGVDTTGDDIIYLKGEDNNDEKQNKKSPKKLLNEKKISSESFDDKLNELREELRENYIRQKKIMNDIKDLANLHKKDLRLAVKSGNRLNSGKHSGFNKPQTVPQSLKDLLKINDDVLSRSKVTELMYKYFTDNKMYNSKTKREIIPNSKIKKLFGMKEGDIITFYNMQTWLKKVYNENQNNEKLEE</sequence>
<protein>
    <recommendedName>
        <fullName>Putative SWIB domain-containing protein R508</fullName>
    </recommendedName>
</protein>
<keyword id="KW-0175">Coiled coil</keyword>
<keyword id="KW-1185">Reference proteome</keyword>
<reference key="1">
    <citation type="journal article" date="2004" name="Science">
        <title>The 1.2-megabase genome sequence of Mimivirus.</title>
        <authorList>
            <person name="Raoult D."/>
            <person name="Audic S."/>
            <person name="Robert C."/>
            <person name="Abergel C."/>
            <person name="Renesto P."/>
            <person name="Ogata H."/>
            <person name="La Scola B."/>
            <person name="Susan M."/>
            <person name="Claverie J.-M."/>
        </authorList>
    </citation>
    <scope>NUCLEOTIDE SEQUENCE [LARGE SCALE GENOMIC DNA]</scope>
    <source>
        <strain>Rowbotham-Bradford</strain>
    </source>
</reference>
<proteinExistence type="predicted"/>
<dbReference type="EMBL" id="AY653733">
    <property type="protein sequence ID" value="AAV50772.1"/>
    <property type="molecule type" value="Genomic_DNA"/>
</dbReference>
<dbReference type="SMR" id="Q5UQ74"/>
<dbReference type="KEGG" id="vg:9925139"/>
<dbReference type="OrthoDB" id="22463at10239"/>
<dbReference type="Proteomes" id="UP000001134">
    <property type="component" value="Genome"/>
</dbReference>
<dbReference type="CDD" id="cd10567">
    <property type="entry name" value="SWIB-MDM2_like"/>
    <property type="match status" value="1"/>
</dbReference>
<dbReference type="Gene3D" id="1.10.245.10">
    <property type="entry name" value="SWIB/MDM2 domain"/>
    <property type="match status" value="1"/>
</dbReference>
<dbReference type="InterPro" id="IPR036885">
    <property type="entry name" value="SWIB_MDM2_dom_sf"/>
</dbReference>
<dbReference type="InterPro" id="IPR003121">
    <property type="entry name" value="SWIB_MDM2_domain"/>
</dbReference>
<dbReference type="Pfam" id="PF02201">
    <property type="entry name" value="SWIB"/>
    <property type="match status" value="1"/>
</dbReference>
<dbReference type="SUPFAM" id="SSF47592">
    <property type="entry name" value="SWIB/MDM2 domain"/>
    <property type="match status" value="1"/>
</dbReference>
<dbReference type="PROSITE" id="PS51925">
    <property type="entry name" value="SWIB_MDM2"/>
    <property type="match status" value="1"/>
</dbReference>
<evidence type="ECO:0000255" key="1"/>
<evidence type="ECO:0000255" key="2">
    <source>
        <dbReference type="PROSITE-ProRule" id="PRU01273"/>
    </source>
</evidence>
<evidence type="ECO:0000256" key="3">
    <source>
        <dbReference type="SAM" id="MobiDB-lite"/>
    </source>
</evidence>
<name>YR508_MIMIV</name>
<feature type="chain" id="PRO_0000247387" description="Putative SWIB domain-containing protein R508">
    <location>
        <begin position="1"/>
        <end position="335"/>
    </location>
</feature>
<feature type="domain" description="SWIB/MDM2" evidence="2">
    <location>
        <begin position="244"/>
        <end position="326"/>
    </location>
</feature>
<feature type="region of interest" description="Disordered" evidence="3">
    <location>
        <begin position="1"/>
        <end position="182"/>
    </location>
</feature>
<feature type="coiled-coil region" evidence="1">
    <location>
        <begin position="181"/>
        <end position="217"/>
    </location>
</feature>
<feature type="compositionally biased region" description="Basic residues" evidence="3">
    <location>
        <begin position="1"/>
        <end position="12"/>
    </location>
</feature>
<feature type="compositionally biased region" description="Low complexity" evidence="3">
    <location>
        <begin position="24"/>
        <end position="33"/>
    </location>
</feature>
<feature type="compositionally biased region" description="Polar residues" evidence="3">
    <location>
        <begin position="60"/>
        <end position="75"/>
    </location>
</feature>
<feature type="compositionally biased region" description="Basic and acidic residues" evidence="3">
    <location>
        <begin position="83"/>
        <end position="109"/>
    </location>
</feature>
<feature type="compositionally biased region" description="Basic residues" evidence="3">
    <location>
        <begin position="110"/>
        <end position="126"/>
    </location>
</feature>
<feature type="compositionally biased region" description="Basic and acidic residues" evidence="3">
    <location>
        <begin position="163"/>
        <end position="173"/>
    </location>
</feature>
<organismHost>
    <name type="scientific">Acanthamoeba polyphaga</name>
    <name type="common">Amoeba</name>
    <dbReference type="NCBI Taxonomy" id="5757"/>
</organismHost>
<gene>
    <name type="ordered locus">MIMI_R508</name>
</gene>
<accession>Q5UQ74</accession>